<name>FOLD1_PSEPG</name>
<keyword id="KW-0028">Amino-acid biosynthesis</keyword>
<keyword id="KW-0368">Histidine biosynthesis</keyword>
<keyword id="KW-0378">Hydrolase</keyword>
<keyword id="KW-0486">Methionine biosynthesis</keyword>
<keyword id="KW-0511">Multifunctional enzyme</keyword>
<keyword id="KW-0521">NADP</keyword>
<keyword id="KW-0554">One-carbon metabolism</keyword>
<keyword id="KW-0560">Oxidoreductase</keyword>
<keyword id="KW-0658">Purine biosynthesis</keyword>
<comment type="function">
    <text evidence="1">Catalyzes the oxidation of 5,10-methylenetetrahydrofolate to 5,10-methenyltetrahydrofolate and then the hydrolysis of 5,10-methenyltetrahydrofolate to 10-formyltetrahydrofolate.</text>
</comment>
<comment type="catalytic activity">
    <reaction evidence="1">
        <text>(6R)-5,10-methylene-5,6,7,8-tetrahydrofolate + NADP(+) = (6R)-5,10-methenyltetrahydrofolate + NADPH</text>
        <dbReference type="Rhea" id="RHEA:22812"/>
        <dbReference type="ChEBI" id="CHEBI:15636"/>
        <dbReference type="ChEBI" id="CHEBI:57455"/>
        <dbReference type="ChEBI" id="CHEBI:57783"/>
        <dbReference type="ChEBI" id="CHEBI:58349"/>
        <dbReference type="EC" id="1.5.1.5"/>
    </reaction>
</comment>
<comment type="catalytic activity">
    <reaction evidence="1">
        <text>(6R)-5,10-methenyltetrahydrofolate + H2O = (6R)-10-formyltetrahydrofolate + H(+)</text>
        <dbReference type="Rhea" id="RHEA:23700"/>
        <dbReference type="ChEBI" id="CHEBI:15377"/>
        <dbReference type="ChEBI" id="CHEBI:15378"/>
        <dbReference type="ChEBI" id="CHEBI:57455"/>
        <dbReference type="ChEBI" id="CHEBI:195366"/>
        <dbReference type="EC" id="3.5.4.9"/>
    </reaction>
</comment>
<comment type="pathway">
    <text evidence="1">One-carbon metabolism; tetrahydrofolate interconversion.</text>
</comment>
<comment type="subunit">
    <text evidence="1">Homodimer.</text>
</comment>
<comment type="similarity">
    <text evidence="1">Belongs to the tetrahydrofolate dehydrogenase/cyclohydrolase family.</text>
</comment>
<gene>
    <name evidence="1" type="primary">folD1</name>
    <name type="ordered locus">PputGB1_1899</name>
</gene>
<feature type="chain" id="PRO_0000340590" description="Bifunctional protein FolD 1">
    <location>
        <begin position="1"/>
        <end position="290"/>
    </location>
</feature>
<feature type="binding site" evidence="1">
    <location>
        <begin position="172"/>
        <end position="174"/>
    </location>
    <ligand>
        <name>NADP(+)</name>
        <dbReference type="ChEBI" id="CHEBI:58349"/>
    </ligand>
</feature>
<feature type="binding site" evidence="1">
    <location>
        <position position="238"/>
    </location>
    <ligand>
        <name>NADP(+)</name>
        <dbReference type="ChEBI" id="CHEBI:58349"/>
    </ligand>
</feature>
<dbReference type="EC" id="1.5.1.5" evidence="1"/>
<dbReference type="EC" id="3.5.4.9" evidence="1"/>
<dbReference type="EMBL" id="CP000926">
    <property type="protein sequence ID" value="ABY97802.1"/>
    <property type="molecule type" value="Genomic_DNA"/>
</dbReference>
<dbReference type="SMR" id="B0KJG3"/>
<dbReference type="KEGG" id="ppg:PputGB1_1899"/>
<dbReference type="eggNOG" id="COG0190">
    <property type="taxonomic scope" value="Bacteria"/>
</dbReference>
<dbReference type="HOGENOM" id="CLU_034045_2_1_6"/>
<dbReference type="UniPathway" id="UPA00193"/>
<dbReference type="Proteomes" id="UP000002157">
    <property type="component" value="Chromosome"/>
</dbReference>
<dbReference type="GO" id="GO:0005829">
    <property type="term" value="C:cytosol"/>
    <property type="evidence" value="ECO:0007669"/>
    <property type="project" value="TreeGrafter"/>
</dbReference>
<dbReference type="GO" id="GO:0004477">
    <property type="term" value="F:methenyltetrahydrofolate cyclohydrolase activity"/>
    <property type="evidence" value="ECO:0007669"/>
    <property type="project" value="UniProtKB-UniRule"/>
</dbReference>
<dbReference type="GO" id="GO:0004488">
    <property type="term" value="F:methylenetetrahydrofolate dehydrogenase (NADP+) activity"/>
    <property type="evidence" value="ECO:0007669"/>
    <property type="project" value="UniProtKB-UniRule"/>
</dbReference>
<dbReference type="GO" id="GO:0000105">
    <property type="term" value="P:L-histidine biosynthetic process"/>
    <property type="evidence" value="ECO:0007669"/>
    <property type="project" value="UniProtKB-KW"/>
</dbReference>
<dbReference type="GO" id="GO:0009086">
    <property type="term" value="P:methionine biosynthetic process"/>
    <property type="evidence" value="ECO:0007669"/>
    <property type="project" value="UniProtKB-KW"/>
</dbReference>
<dbReference type="GO" id="GO:0006164">
    <property type="term" value="P:purine nucleotide biosynthetic process"/>
    <property type="evidence" value="ECO:0007669"/>
    <property type="project" value="UniProtKB-KW"/>
</dbReference>
<dbReference type="GO" id="GO:0035999">
    <property type="term" value="P:tetrahydrofolate interconversion"/>
    <property type="evidence" value="ECO:0007669"/>
    <property type="project" value="UniProtKB-UniRule"/>
</dbReference>
<dbReference type="CDD" id="cd01080">
    <property type="entry name" value="NAD_bind_m-THF_DH_Cyclohyd"/>
    <property type="match status" value="1"/>
</dbReference>
<dbReference type="FunFam" id="3.40.50.10860:FF:000001">
    <property type="entry name" value="Bifunctional protein FolD"/>
    <property type="match status" value="1"/>
</dbReference>
<dbReference type="FunFam" id="3.40.50.720:FF:000006">
    <property type="entry name" value="Bifunctional protein FolD"/>
    <property type="match status" value="1"/>
</dbReference>
<dbReference type="Gene3D" id="3.40.50.10860">
    <property type="entry name" value="Leucine Dehydrogenase, chain A, domain 1"/>
    <property type="match status" value="1"/>
</dbReference>
<dbReference type="Gene3D" id="3.40.50.720">
    <property type="entry name" value="NAD(P)-binding Rossmann-like Domain"/>
    <property type="match status" value="1"/>
</dbReference>
<dbReference type="HAMAP" id="MF_01576">
    <property type="entry name" value="THF_DHG_CYH"/>
    <property type="match status" value="1"/>
</dbReference>
<dbReference type="InterPro" id="IPR046346">
    <property type="entry name" value="Aminoacid_DH-like_N_sf"/>
</dbReference>
<dbReference type="InterPro" id="IPR036291">
    <property type="entry name" value="NAD(P)-bd_dom_sf"/>
</dbReference>
<dbReference type="InterPro" id="IPR000672">
    <property type="entry name" value="THF_DH/CycHdrlase"/>
</dbReference>
<dbReference type="InterPro" id="IPR020630">
    <property type="entry name" value="THF_DH/CycHdrlase_cat_dom"/>
</dbReference>
<dbReference type="InterPro" id="IPR020631">
    <property type="entry name" value="THF_DH/CycHdrlase_NAD-bd_dom"/>
</dbReference>
<dbReference type="NCBIfam" id="NF008058">
    <property type="entry name" value="PRK10792.1"/>
    <property type="match status" value="1"/>
</dbReference>
<dbReference type="NCBIfam" id="NF010783">
    <property type="entry name" value="PRK14186.1"/>
    <property type="match status" value="1"/>
</dbReference>
<dbReference type="PANTHER" id="PTHR48099:SF5">
    <property type="entry name" value="C-1-TETRAHYDROFOLATE SYNTHASE, CYTOPLASMIC"/>
    <property type="match status" value="1"/>
</dbReference>
<dbReference type="PANTHER" id="PTHR48099">
    <property type="entry name" value="C-1-TETRAHYDROFOLATE SYNTHASE, CYTOPLASMIC-RELATED"/>
    <property type="match status" value="1"/>
</dbReference>
<dbReference type="Pfam" id="PF00763">
    <property type="entry name" value="THF_DHG_CYH"/>
    <property type="match status" value="1"/>
</dbReference>
<dbReference type="Pfam" id="PF02882">
    <property type="entry name" value="THF_DHG_CYH_C"/>
    <property type="match status" value="1"/>
</dbReference>
<dbReference type="PRINTS" id="PR00085">
    <property type="entry name" value="THFDHDRGNASE"/>
</dbReference>
<dbReference type="SUPFAM" id="SSF53223">
    <property type="entry name" value="Aminoacid dehydrogenase-like, N-terminal domain"/>
    <property type="match status" value="1"/>
</dbReference>
<dbReference type="SUPFAM" id="SSF51735">
    <property type="entry name" value="NAD(P)-binding Rossmann-fold domains"/>
    <property type="match status" value="1"/>
</dbReference>
<sequence>MVNHASMTAHLIDGKAIAASLRQQIAQRVVERRQQGLRTPGLAVILVGTDPASQVYVSHKRKDCEEVGFISQAFDLPSETTQQALTELIDRLNDDPAVDGILLQLPLPAHLDASLLLERIRPDKDVDGFHPYNIGRLAQRIPLLRPCTPKGIMTLLESTGQDLYGMNAVIVGASNIVGRPMAMELLLAGCTVTVCHRFTKDLAGHVGRADLVVVAAGKPGLVKGEWVKEGAIVIDVGINRQEDGKLVGDVVYETALPRAGWITPVPGGVGPMTRACLLENTLYAAEELHK</sequence>
<proteinExistence type="inferred from homology"/>
<reference key="1">
    <citation type="submission" date="2008-01" db="EMBL/GenBank/DDBJ databases">
        <title>Complete sequence of Pseudomonas putida GB-1.</title>
        <authorList>
            <consortium name="US DOE Joint Genome Institute"/>
            <person name="Copeland A."/>
            <person name="Lucas S."/>
            <person name="Lapidus A."/>
            <person name="Barry K."/>
            <person name="Glavina del Rio T."/>
            <person name="Dalin E."/>
            <person name="Tice H."/>
            <person name="Pitluck S."/>
            <person name="Bruce D."/>
            <person name="Goodwin L."/>
            <person name="Chertkov O."/>
            <person name="Brettin T."/>
            <person name="Detter J.C."/>
            <person name="Han C."/>
            <person name="Kuske C.R."/>
            <person name="Schmutz J."/>
            <person name="Larimer F."/>
            <person name="Land M."/>
            <person name="Hauser L."/>
            <person name="Kyrpides N."/>
            <person name="Kim E."/>
            <person name="McCarthy J.K."/>
            <person name="Richardson P."/>
        </authorList>
    </citation>
    <scope>NUCLEOTIDE SEQUENCE [LARGE SCALE GENOMIC DNA]</scope>
    <source>
        <strain>GB-1</strain>
    </source>
</reference>
<evidence type="ECO:0000255" key="1">
    <source>
        <dbReference type="HAMAP-Rule" id="MF_01576"/>
    </source>
</evidence>
<accession>B0KJG3</accession>
<protein>
    <recommendedName>
        <fullName evidence="1">Bifunctional protein FolD 1</fullName>
    </recommendedName>
    <domain>
        <recommendedName>
            <fullName evidence="1">Methylenetetrahydrofolate dehydrogenase</fullName>
            <ecNumber evidence="1">1.5.1.5</ecNumber>
        </recommendedName>
    </domain>
    <domain>
        <recommendedName>
            <fullName evidence="1">Methenyltetrahydrofolate cyclohydrolase</fullName>
            <ecNumber evidence="1">3.5.4.9</ecNumber>
        </recommendedName>
    </domain>
</protein>
<organism>
    <name type="scientific">Pseudomonas putida (strain GB-1)</name>
    <dbReference type="NCBI Taxonomy" id="76869"/>
    <lineage>
        <taxon>Bacteria</taxon>
        <taxon>Pseudomonadati</taxon>
        <taxon>Pseudomonadota</taxon>
        <taxon>Gammaproteobacteria</taxon>
        <taxon>Pseudomonadales</taxon>
        <taxon>Pseudomonadaceae</taxon>
        <taxon>Pseudomonas</taxon>
    </lineage>
</organism>